<reference key="1">
    <citation type="journal article" date="2008" name="Genomics">
        <title>Characterization of ST-4821 complex, a unique Neisseria meningitidis clone.</title>
        <authorList>
            <person name="Peng J."/>
            <person name="Yang L."/>
            <person name="Yang F."/>
            <person name="Yang J."/>
            <person name="Yan Y."/>
            <person name="Nie H."/>
            <person name="Zhang X."/>
            <person name="Xiong Z."/>
            <person name="Jiang Y."/>
            <person name="Cheng F."/>
            <person name="Xu X."/>
            <person name="Chen S."/>
            <person name="Sun L."/>
            <person name="Li W."/>
            <person name="Shen Y."/>
            <person name="Shao Z."/>
            <person name="Liang X."/>
            <person name="Xu J."/>
            <person name="Jin Q."/>
        </authorList>
    </citation>
    <scope>NUCLEOTIDE SEQUENCE [LARGE SCALE GENOMIC DNA]</scope>
    <source>
        <strain>053442</strain>
    </source>
</reference>
<keyword id="KW-0004">4Fe-4S</keyword>
<keyword id="KW-0028">Amino-acid biosynthesis</keyword>
<keyword id="KW-0198">Cysteine biosynthesis</keyword>
<keyword id="KW-0349">Heme</keyword>
<keyword id="KW-0408">Iron</keyword>
<keyword id="KW-0411">Iron-sulfur</keyword>
<keyword id="KW-0479">Metal-binding</keyword>
<keyword id="KW-0521">NADP</keyword>
<keyword id="KW-0560">Oxidoreductase</keyword>
<feature type="chain" id="PRO_1000087627" description="Sulfite reductase [NADPH] hemoprotein beta-component">
    <location>
        <begin position="1"/>
        <end position="589"/>
    </location>
</feature>
<feature type="binding site" evidence="1">
    <location>
        <position position="443"/>
    </location>
    <ligand>
        <name>[4Fe-4S] cluster</name>
        <dbReference type="ChEBI" id="CHEBI:49883"/>
    </ligand>
</feature>
<feature type="binding site" evidence="1">
    <location>
        <position position="449"/>
    </location>
    <ligand>
        <name>[4Fe-4S] cluster</name>
        <dbReference type="ChEBI" id="CHEBI:49883"/>
    </ligand>
</feature>
<feature type="binding site" evidence="1">
    <location>
        <position position="488"/>
    </location>
    <ligand>
        <name>[4Fe-4S] cluster</name>
        <dbReference type="ChEBI" id="CHEBI:49883"/>
    </ligand>
</feature>
<feature type="binding site" evidence="1">
    <location>
        <position position="492"/>
    </location>
    <ligand>
        <name>[4Fe-4S] cluster</name>
        <dbReference type="ChEBI" id="CHEBI:49883"/>
    </ligand>
</feature>
<feature type="binding site" description="axial binding residue" evidence="1">
    <location>
        <position position="492"/>
    </location>
    <ligand>
        <name>siroheme</name>
        <dbReference type="ChEBI" id="CHEBI:60052"/>
    </ligand>
    <ligandPart>
        <name>Fe</name>
        <dbReference type="ChEBI" id="CHEBI:18248"/>
    </ligandPart>
</feature>
<gene>
    <name evidence="1" type="primary">cysI</name>
    <name type="ordered locus">NMCC_1069</name>
</gene>
<proteinExistence type="inferred from homology"/>
<organism>
    <name type="scientific">Neisseria meningitidis serogroup C (strain 053442)</name>
    <dbReference type="NCBI Taxonomy" id="374833"/>
    <lineage>
        <taxon>Bacteria</taxon>
        <taxon>Pseudomonadati</taxon>
        <taxon>Pseudomonadota</taxon>
        <taxon>Betaproteobacteria</taxon>
        <taxon>Neisseriales</taxon>
        <taxon>Neisseriaceae</taxon>
        <taxon>Neisseria</taxon>
    </lineage>
</organism>
<protein>
    <recommendedName>
        <fullName evidence="1">Sulfite reductase [NADPH] hemoprotein beta-component</fullName>
        <shortName evidence="1">SiR-HP</shortName>
        <shortName evidence="1">SiRHP</shortName>
        <ecNumber evidence="1">1.8.1.2</ecNumber>
    </recommendedName>
</protein>
<accession>A9LZ72</accession>
<comment type="function">
    <text evidence="1">Component of the sulfite reductase complex that catalyzes the 6-electron reduction of sulfite to sulfide. This is one of several activities required for the biosynthesis of L-cysteine from sulfate.</text>
</comment>
<comment type="catalytic activity">
    <reaction evidence="1">
        <text>hydrogen sulfide + 3 NADP(+) + 3 H2O = sulfite + 3 NADPH + 4 H(+)</text>
        <dbReference type="Rhea" id="RHEA:13801"/>
        <dbReference type="ChEBI" id="CHEBI:15377"/>
        <dbReference type="ChEBI" id="CHEBI:15378"/>
        <dbReference type="ChEBI" id="CHEBI:17359"/>
        <dbReference type="ChEBI" id="CHEBI:29919"/>
        <dbReference type="ChEBI" id="CHEBI:57783"/>
        <dbReference type="ChEBI" id="CHEBI:58349"/>
        <dbReference type="EC" id="1.8.1.2"/>
    </reaction>
</comment>
<comment type="cofactor">
    <cofactor evidence="1">
        <name>siroheme</name>
        <dbReference type="ChEBI" id="CHEBI:60052"/>
    </cofactor>
    <text evidence="1">Binds 1 siroheme per subunit.</text>
</comment>
<comment type="cofactor">
    <cofactor evidence="1">
        <name>[4Fe-4S] cluster</name>
        <dbReference type="ChEBI" id="CHEBI:49883"/>
    </cofactor>
    <text evidence="1">Binds 1 [4Fe-4S] cluster per subunit.</text>
</comment>
<comment type="pathway">
    <text evidence="1">Sulfur metabolism; hydrogen sulfide biosynthesis; hydrogen sulfide from sulfite (NADPH route): step 1/1.</text>
</comment>
<comment type="subunit">
    <text evidence="1">Alpha(8)-beta(8). The alpha component is a flavoprotein, the beta component is a hemoprotein.</text>
</comment>
<comment type="similarity">
    <text evidence="1">Belongs to the nitrite and sulfite reductase 4Fe-4S domain family.</text>
</comment>
<name>CYSI_NEIM0</name>
<evidence type="ECO:0000255" key="1">
    <source>
        <dbReference type="HAMAP-Rule" id="MF_01540"/>
    </source>
</evidence>
<sequence>MTVQTKTKGLAWQEKPLSDNERLKTESNFLRGTILDDLKDPLTGGFKGDNFQLIRFHGMYEQDDRDIRAERAEAKLEPLKFMLLRCRLPGGIIKPSQWIELDKFARENSHYRSIRLTNRQTFQFHGVPKAKLQTMHRLLHKLGLDSIATAADMNRNVLCTSNPIESELHRQAYEYAKKISEHLLPRTRGYLDVWVDGKKVQSSDDFLQEDEPILGKTYLPRKFKTAVVIPPLNDVDCYGNDLDFVAISDGNGQLAGFNVLAGGGLSMEHGNTKTYPNISLELGFVPPEHALKAAEAVVTTQRDFGNRSDRKNARTRYTIQNMGLDNFRAEVERRMGMPFEPIRPFKFTGRGDRIGWVKGIDGNWHLTLFIESGRLVDEGGKQLLTGVLEIAKIHKGDFRITANQNLIVANVAEADKAKIEELARTYGLIRNDVSKLRENAMSCVSFPTCPLAMAEAERVLPDFIDELDKIMAKHGTSDDYIVTRITGCPNGCGRAMLAEIGLVGKAVERYNLHIGGDREGVRIPRLYKENITLPEILAELDDLIGKWAAERNIGEGFGDFAIRTGIVKPVLNAPVDFWDVSKAVAIARA</sequence>
<dbReference type="EC" id="1.8.1.2" evidence="1"/>
<dbReference type="EMBL" id="CP000381">
    <property type="protein sequence ID" value="ABX73249.1"/>
    <property type="molecule type" value="Genomic_DNA"/>
</dbReference>
<dbReference type="RefSeq" id="WP_012221644.1">
    <property type="nucleotide sequence ID" value="NC_010120.1"/>
</dbReference>
<dbReference type="SMR" id="A9LZ72"/>
<dbReference type="KEGG" id="nmn:NMCC_1069"/>
<dbReference type="HOGENOM" id="CLU_001975_3_2_4"/>
<dbReference type="UniPathway" id="UPA00140">
    <property type="reaction ID" value="UER00207"/>
</dbReference>
<dbReference type="Proteomes" id="UP000001177">
    <property type="component" value="Chromosome"/>
</dbReference>
<dbReference type="GO" id="GO:0009337">
    <property type="term" value="C:sulfite reductase complex (NADPH)"/>
    <property type="evidence" value="ECO:0007669"/>
    <property type="project" value="InterPro"/>
</dbReference>
<dbReference type="GO" id="GO:0051539">
    <property type="term" value="F:4 iron, 4 sulfur cluster binding"/>
    <property type="evidence" value="ECO:0007669"/>
    <property type="project" value="UniProtKB-KW"/>
</dbReference>
<dbReference type="GO" id="GO:0020037">
    <property type="term" value="F:heme binding"/>
    <property type="evidence" value="ECO:0007669"/>
    <property type="project" value="InterPro"/>
</dbReference>
<dbReference type="GO" id="GO:0046872">
    <property type="term" value="F:metal ion binding"/>
    <property type="evidence" value="ECO:0007669"/>
    <property type="project" value="UniProtKB-KW"/>
</dbReference>
<dbReference type="GO" id="GO:0050661">
    <property type="term" value="F:NADP binding"/>
    <property type="evidence" value="ECO:0007669"/>
    <property type="project" value="InterPro"/>
</dbReference>
<dbReference type="GO" id="GO:0050311">
    <property type="term" value="F:sulfite reductase (ferredoxin) activity"/>
    <property type="evidence" value="ECO:0007669"/>
    <property type="project" value="TreeGrafter"/>
</dbReference>
<dbReference type="GO" id="GO:0004783">
    <property type="term" value="F:sulfite reductase (NADPH) activity"/>
    <property type="evidence" value="ECO:0007669"/>
    <property type="project" value="UniProtKB-UniRule"/>
</dbReference>
<dbReference type="GO" id="GO:0019344">
    <property type="term" value="P:cysteine biosynthetic process"/>
    <property type="evidence" value="ECO:0007669"/>
    <property type="project" value="UniProtKB-KW"/>
</dbReference>
<dbReference type="GO" id="GO:0070814">
    <property type="term" value="P:hydrogen sulfide biosynthetic process"/>
    <property type="evidence" value="ECO:0007669"/>
    <property type="project" value="UniProtKB-UniRule"/>
</dbReference>
<dbReference type="GO" id="GO:0000103">
    <property type="term" value="P:sulfate assimilation"/>
    <property type="evidence" value="ECO:0007669"/>
    <property type="project" value="UniProtKB-UniRule"/>
</dbReference>
<dbReference type="FunFam" id="3.30.413.10:FF:000003">
    <property type="entry name" value="Sulfite reductase [NADPH] hemoprotein beta-component"/>
    <property type="match status" value="1"/>
</dbReference>
<dbReference type="FunFam" id="3.30.413.10:FF:000004">
    <property type="entry name" value="Sulfite reductase [NADPH] hemoprotein beta-component"/>
    <property type="match status" value="1"/>
</dbReference>
<dbReference type="Gene3D" id="3.30.413.10">
    <property type="entry name" value="Sulfite Reductase Hemoprotein, domain 1"/>
    <property type="match status" value="2"/>
</dbReference>
<dbReference type="HAMAP" id="MF_01540">
    <property type="entry name" value="CysI"/>
    <property type="match status" value="1"/>
</dbReference>
<dbReference type="InterPro" id="IPR011786">
    <property type="entry name" value="CysI"/>
</dbReference>
<dbReference type="InterPro" id="IPR005117">
    <property type="entry name" value="NiRdtase/SiRdtase_haem-b_fer"/>
</dbReference>
<dbReference type="InterPro" id="IPR036136">
    <property type="entry name" value="Nit/Sulf_reduc_fer-like_dom_sf"/>
</dbReference>
<dbReference type="InterPro" id="IPR006067">
    <property type="entry name" value="NO2/SO3_Rdtase_4Fe4S_dom"/>
</dbReference>
<dbReference type="InterPro" id="IPR045169">
    <property type="entry name" value="NO2/SO3_Rdtase_4Fe4S_prot"/>
</dbReference>
<dbReference type="InterPro" id="IPR045854">
    <property type="entry name" value="NO2/SO3_Rdtase_4Fe4S_sf"/>
</dbReference>
<dbReference type="InterPro" id="IPR006066">
    <property type="entry name" value="NO2/SO3_Rdtase_FeS/sirohaem_BS"/>
</dbReference>
<dbReference type="NCBIfam" id="TIGR02041">
    <property type="entry name" value="CysI"/>
    <property type="match status" value="1"/>
</dbReference>
<dbReference type="NCBIfam" id="NF010029">
    <property type="entry name" value="PRK13504.1"/>
    <property type="match status" value="1"/>
</dbReference>
<dbReference type="PANTHER" id="PTHR11493:SF47">
    <property type="entry name" value="SULFITE REDUCTASE [NADPH] SUBUNIT BETA"/>
    <property type="match status" value="1"/>
</dbReference>
<dbReference type="PANTHER" id="PTHR11493">
    <property type="entry name" value="SULFITE REDUCTASE [NADPH] SUBUNIT BETA-RELATED"/>
    <property type="match status" value="1"/>
</dbReference>
<dbReference type="Pfam" id="PF01077">
    <property type="entry name" value="NIR_SIR"/>
    <property type="match status" value="1"/>
</dbReference>
<dbReference type="Pfam" id="PF03460">
    <property type="entry name" value="NIR_SIR_ferr"/>
    <property type="match status" value="2"/>
</dbReference>
<dbReference type="PRINTS" id="PR00397">
    <property type="entry name" value="SIROHAEM"/>
</dbReference>
<dbReference type="SUPFAM" id="SSF56014">
    <property type="entry name" value="Nitrite and sulphite reductase 4Fe-4S domain-like"/>
    <property type="match status" value="2"/>
</dbReference>
<dbReference type="SUPFAM" id="SSF55124">
    <property type="entry name" value="Nitrite/Sulfite reductase N-terminal domain-like"/>
    <property type="match status" value="2"/>
</dbReference>
<dbReference type="PROSITE" id="PS00365">
    <property type="entry name" value="NIR_SIR"/>
    <property type="match status" value="1"/>
</dbReference>